<evidence type="ECO:0000255" key="1">
    <source>
        <dbReference type="HAMAP-Rule" id="MF_00031"/>
    </source>
</evidence>
<reference key="1">
    <citation type="journal article" date="2006" name="Proc. Natl. Acad. Sci. U.S.A.">
        <title>Comparative genomics of the lactic acid bacteria.</title>
        <authorList>
            <person name="Makarova K.S."/>
            <person name="Slesarev A."/>
            <person name="Wolf Y.I."/>
            <person name="Sorokin A."/>
            <person name="Mirkin B."/>
            <person name="Koonin E.V."/>
            <person name="Pavlov A."/>
            <person name="Pavlova N."/>
            <person name="Karamychev V."/>
            <person name="Polouchine N."/>
            <person name="Shakhova V."/>
            <person name="Grigoriev I."/>
            <person name="Lou Y."/>
            <person name="Rohksar D."/>
            <person name="Lucas S."/>
            <person name="Huang K."/>
            <person name="Goodstein D.M."/>
            <person name="Hawkins T."/>
            <person name="Plengvidhya V."/>
            <person name="Welker D."/>
            <person name="Hughes J."/>
            <person name="Goh Y."/>
            <person name="Benson A."/>
            <person name="Baldwin K."/>
            <person name="Lee J.-H."/>
            <person name="Diaz-Muniz I."/>
            <person name="Dosti B."/>
            <person name="Smeianov V."/>
            <person name="Wechter W."/>
            <person name="Barabote R."/>
            <person name="Lorca G."/>
            <person name="Altermann E."/>
            <person name="Barrangou R."/>
            <person name="Ganesan B."/>
            <person name="Xie Y."/>
            <person name="Rawsthorne H."/>
            <person name="Tamir D."/>
            <person name="Parker C."/>
            <person name="Breidt F."/>
            <person name="Broadbent J.R."/>
            <person name="Hutkins R."/>
            <person name="O'Sullivan D."/>
            <person name="Steele J."/>
            <person name="Unlu G."/>
            <person name="Saier M.H. Jr."/>
            <person name="Klaenhammer T."/>
            <person name="Richardson P."/>
            <person name="Kozyavkin S."/>
            <person name="Weimer B.C."/>
            <person name="Mills D.A."/>
        </authorList>
    </citation>
    <scope>NUCLEOTIDE SEQUENCE [LARGE SCALE GENOMIC DNA]</scope>
    <source>
        <strain>ATCC 8293 / DSM 20343 / BCRC 11652 / CCM 1803 / JCM 6124 / NCDO 523 / NBRC 100496 / NCIMB 8023 / NCTC 12954 / NRRL B-1118 / 37Y</strain>
    </source>
</reference>
<feature type="chain" id="PRO_1000002477" description="Holliday junction branch migration complex subunit RuvA">
    <location>
        <begin position="1"/>
        <end position="196"/>
    </location>
</feature>
<feature type="region of interest" description="Domain I" evidence="1">
    <location>
        <begin position="1"/>
        <end position="62"/>
    </location>
</feature>
<feature type="region of interest" description="Domain II" evidence="1">
    <location>
        <begin position="63"/>
        <end position="141"/>
    </location>
</feature>
<feature type="region of interest" description="Flexible linker" evidence="1">
    <location>
        <begin position="142"/>
        <end position="148"/>
    </location>
</feature>
<feature type="region of interest" description="Domain III" evidence="1">
    <location>
        <begin position="148"/>
        <end position="196"/>
    </location>
</feature>
<keyword id="KW-0963">Cytoplasm</keyword>
<keyword id="KW-0227">DNA damage</keyword>
<keyword id="KW-0233">DNA recombination</keyword>
<keyword id="KW-0234">DNA repair</keyword>
<keyword id="KW-0238">DNA-binding</keyword>
<keyword id="KW-1185">Reference proteome</keyword>
<protein>
    <recommendedName>
        <fullName evidence="1">Holliday junction branch migration complex subunit RuvA</fullName>
    </recommendedName>
</protein>
<dbReference type="EMBL" id="CP000414">
    <property type="protein sequence ID" value="ABJ61730.1"/>
    <property type="molecule type" value="Genomic_DNA"/>
</dbReference>
<dbReference type="RefSeq" id="WP_011679431.1">
    <property type="nucleotide sequence ID" value="NC_008531.1"/>
</dbReference>
<dbReference type="SMR" id="Q03YJ2"/>
<dbReference type="EnsemblBacteria" id="ABJ61730">
    <property type="protein sequence ID" value="ABJ61730"/>
    <property type="gene ID" value="LEUM_0616"/>
</dbReference>
<dbReference type="GeneID" id="29577114"/>
<dbReference type="KEGG" id="lme:LEUM_0616"/>
<dbReference type="eggNOG" id="COG0632">
    <property type="taxonomic scope" value="Bacteria"/>
</dbReference>
<dbReference type="HOGENOM" id="CLU_087936_1_0_9"/>
<dbReference type="Proteomes" id="UP000000362">
    <property type="component" value="Chromosome"/>
</dbReference>
<dbReference type="GO" id="GO:0005737">
    <property type="term" value="C:cytoplasm"/>
    <property type="evidence" value="ECO:0007669"/>
    <property type="project" value="UniProtKB-SubCell"/>
</dbReference>
<dbReference type="GO" id="GO:0009379">
    <property type="term" value="C:Holliday junction helicase complex"/>
    <property type="evidence" value="ECO:0007669"/>
    <property type="project" value="InterPro"/>
</dbReference>
<dbReference type="GO" id="GO:0048476">
    <property type="term" value="C:Holliday junction resolvase complex"/>
    <property type="evidence" value="ECO:0007669"/>
    <property type="project" value="UniProtKB-UniRule"/>
</dbReference>
<dbReference type="GO" id="GO:0005524">
    <property type="term" value="F:ATP binding"/>
    <property type="evidence" value="ECO:0007669"/>
    <property type="project" value="InterPro"/>
</dbReference>
<dbReference type="GO" id="GO:0000400">
    <property type="term" value="F:four-way junction DNA binding"/>
    <property type="evidence" value="ECO:0007669"/>
    <property type="project" value="UniProtKB-UniRule"/>
</dbReference>
<dbReference type="GO" id="GO:0009378">
    <property type="term" value="F:four-way junction helicase activity"/>
    <property type="evidence" value="ECO:0007669"/>
    <property type="project" value="InterPro"/>
</dbReference>
<dbReference type="GO" id="GO:0006310">
    <property type="term" value="P:DNA recombination"/>
    <property type="evidence" value="ECO:0007669"/>
    <property type="project" value="UniProtKB-UniRule"/>
</dbReference>
<dbReference type="GO" id="GO:0006281">
    <property type="term" value="P:DNA repair"/>
    <property type="evidence" value="ECO:0007669"/>
    <property type="project" value="UniProtKB-UniRule"/>
</dbReference>
<dbReference type="CDD" id="cd14332">
    <property type="entry name" value="UBA_RuvA_C"/>
    <property type="match status" value="1"/>
</dbReference>
<dbReference type="Gene3D" id="1.10.150.20">
    <property type="entry name" value="5' to 3' exonuclease, C-terminal subdomain"/>
    <property type="match status" value="1"/>
</dbReference>
<dbReference type="Gene3D" id="1.10.8.10">
    <property type="entry name" value="DNA helicase RuvA subunit, C-terminal domain"/>
    <property type="match status" value="1"/>
</dbReference>
<dbReference type="Gene3D" id="2.40.50.140">
    <property type="entry name" value="Nucleic acid-binding proteins"/>
    <property type="match status" value="1"/>
</dbReference>
<dbReference type="HAMAP" id="MF_00031">
    <property type="entry name" value="DNA_HJ_migration_RuvA"/>
    <property type="match status" value="1"/>
</dbReference>
<dbReference type="InterPro" id="IPR013849">
    <property type="entry name" value="DNA_helicase_Holl-junc_RuvA_I"/>
</dbReference>
<dbReference type="InterPro" id="IPR003583">
    <property type="entry name" value="Hlx-hairpin-Hlx_DNA-bd_motif"/>
</dbReference>
<dbReference type="InterPro" id="IPR012340">
    <property type="entry name" value="NA-bd_OB-fold"/>
</dbReference>
<dbReference type="InterPro" id="IPR000085">
    <property type="entry name" value="RuvA"/>
</dbReference>
<dbReference type="InterPro" id="IPR010994">
    <property type="entry name" value="RuvA_2-like"/>
</dbReference>
<dbReference type="InterPro" id="IPR011114">
    <property type="entry name" value="RuvA_C"/>
</dbReference>
<dbReference type="InterPro" id="IPR036267">
    <property type="entry name" value="RuvA_C_sf"/>
</dbReference>
<dbReference type="NCBIfam" id="TIGR00084">
    <property type="entry name" value="ruvA"/>
    <property type="match status" value="1"/>
</dbReference>
<dbReference type="Pfam" id="PF14520">
    <property type="entry name" value="HHH_5"/>
    <property type="match status" value="1"/>
</dbReference>
<dbReference type="Pfam" id="PF07499">
    <property type="entry name" value="RuvA_C"/>
    <property type="match status" value="1"/>
</dbReference>
<dbReference type="Pfam" id="PF01330">
    <property type="entry name" value="RuvA_N"/>
    <property type="match status" value="1"/>
</dbReference>
<dbReference type="SMART" id="SM00278">
    <property type="entry name" value="HhH1"/>
    <property type="match status" value="2"/>
</dbReference>
<dbReference type="SUPFAM" id="SSF46929">
    <property type="entry name" value="DNA helicase RuvA subunit, C-terminal domain"/>
    <property type="match status" value="1"/>
</dbReference>
<dbReference type="SUPFAM" id="SSF50249">
    <property type="entry name" value="Nucleic acid-binding proteins"/>
    <property type="match status" value="1"/>
</dbReference>
<dbReference type="SUPFAM" id="SSF47781">
    <property type="entry name" value="RuvA domain 2-like"/>
    <property type="match status" value="1"/>
</dbReference>
<gene>
    <name evidence="1" type="primary">ruvA</name>
    <name type="ordered locus">LEUM_0616</name>
</gene>
<comment type="function">
    <text evidence="1">The RuvA-RuvB-RuvC complex processes Holliday junction (HJ) DNA during genetic recombination and DNA repair, while the RuvA-RuvB complex plays an important role in the rescue of blocked DNA replication forks via replication fork reversal (RFR). RuvA specifically binds to HJ cruciform DNA, conferring on it an open structure. The RuvB hexamer acts as an ATP-dependent pump, pulling dsDNA into and through the RuvAB complex. HJ branch migration allows RuvC to scan DNA until it finds its consensus sequence, where it cleaves and resolves the cruciform DNA.</text>
</comment>
<comment type="subunit">
    <text evidence="1">Homotetramer. Forms an RuvA(8)-RuvB(12)-Holliday junction (HJ) complex. HJ DNA is sandwiched between 2 RuvA tetramers; dsDNA enters through RuvA and exits via RuvB. An RuvB hexamer assembles on each DNA strand where it exits the tetramer. Each RuvB hexamer is contacted by two RuvA subunits (via domain III) on 2 adjacent RuvB subunits; this complex drives branch migration. In the full resolvosome a probable DNA-RuvA(4)-RuvB(12)-RuvC(2) complex forms which resolves the HJ.</text>
</comment>
<comment type="subcellular location">
    <subcellularLocation>
        <location evidence="1">Cytoplasm</location>
    </subcellularLocation>
</comment>
<comment type="domain">
    <text evidence="1">Has three domains with a flexible linker between the domains II and III and assumes an 'L' shape. Domain III is highly mobile and contacts RuvB.</text>
</comment>
<comment type="similarity">
    <text evidence="1">Belongs to the RuvA family.</text>
</comment>
<organism>
    <name type="scientific">Leuconostoc mesenteroides subsp. mesenteroides (strain ATCC 8293 / DSM 20343 / BCRC 11652 / CCM 1803 / JCM 6124 / NCDO 523 / NBRC 100496 / NCIMB 8023 / NCTC 12954 / NRRL B-1118 / 37Y)</name>
    <dbReference type="NCBI Taxonomy" id="203120"/>
    <lineage>
        <taxon>Bacteria</taxon>
        <taxon>Bacillati</taxon>
        <taxon>Bacillota</taxon>
        <taxon>Bacilli</taxon>
        <taxon>Lactobacillales</taxon>
        <taxon>Lactobacillaceae</taxon>
        <taxon>Leuconostoc</taxon>
    </lineage>
</organism>
<name>RUVA_LEUMM</name>
<accession>Q03YJ2</accession>
<proteinExistence type="inferred from homology"/>
<sequence length="196" mass="21226">MYEYINGLITNITPSYIVIASRSGVGYRLYSANPYRFEENVESHVYVQQIVRENDISLYGFIDADEKALFNKLLNVSGIGPKSALAILANGDAEGLISAVENDNVAYLTQFPGVGKKTAQQIVLDLKGKLDELASKTGMVDSSSNPEQSQALDDALEALLALGYTAKDVKAVAQIIGRNSDTTDGYIRSALKLLVK</sequence>